<feature type="chain" id="PRO_0000173159" description="Large ribosomal subunit protein bL31">
    <location>
        <begin position="1"/>
        <end position="70"/>
    </location>
</feature>
<feature type="binding site" evidence="1">
    <location>
        <position position="16"/>
    </location>
    <ligand>
        <name>Zn(2+)</name>
        <dbReference type="ChEBI" id="CHEBI:29105"/>
    </ligand>
</feature>
<feature type="binding site" evidence="1">
    <location>
        <position position="18"/>
    </location>
    <ligand>
        <name>Zn(2+)</name>
        <dbReference type="ChEBI" id="CHEBI:29105"/>
    </ligand>
</feature>
<feature type="binding site" evidence="1">
    <location>
        <position position="37"/>
    </location>
    <ligand>
        <name>Zn(2+)</name>
        <dbReference type="ChEBI" id="CHEBI:29105"/>
    </ligand>
</feature>
<feature type="binding site" evidence="1">
    <location>
        <position position="40"/>
    </location>
    <ligand>
        <name>Zn(2+)</name>
        <dbReference type="ChEBI" id="CHEBI:29105"/>
    </ligand>
</feature>
<proteinExistence type="inferred from homology"/>
<protein>
    <recommendedName>
        <fullName evidence="1">Large ribosomal subunit protein bL31</fullName>
    </recommendedName>
    <alternativeName>
        <fullName evidence="2">50S ribosomal protein L31</fullName>
    </alternativeName>
</protein>
<comment type="function">
    <text evidence="1">Binds the 23S rRNA.</text>
</comment>
<comment type="cofactor">
    <cofactor evidence="1">
        <name>Zn(2+)</name>
        <dbReference type="ChEBI" id="CHEBI:29105"/>
    </cofactor>
    <text evidence="1">Binds 1 zinc ion per subunit.</text>
</comment>
<comment type="subunit">
    <text evidence="1">Part of the 50S ribosomal subunit.</text>
</comment>
<comment type="similarity">
    <text evidence="1">Belongs to the bacterial ribosomal protein bL31 family. Type A subfamily.</text>
</comment>
<organism>
    <name type="scientific">Salmonella typhi</name>
    <dbReference type="NCBI Taxonomy" id="90370"/>
    <lineage>
        <taxon>Bacteria</taxon>
        <taxon>Pseudomonadati</taxon>
        <taxon>Pseudomonadota</taxon>
        <taxon>Gammaproteobacteria</taxon>
        <taxon>Enterobacterales</taxon>
        <taxon>Enterobacteriaceae</taxon>
        <taxon>Salmonella</taxon>
    </lineage>
</organism>
<keyword id="KW-0479">Metal-binding</keyword>
<keyword id="KW-0687">Ribonucleoprotein</keyword>
<keyword id="KW-0689">Ribosomal protein</keyword>
<keyword id="KW-0694">RNA-binding</keyword>
<keyword id="KW-0699">rRNA-binding</keyword>
<keyword id="KW-0862">Zinc</keyword>
<name>RL31_SALTI</name>
<accession>P66192</accession>
<accession>Q8XGL1</accession>
<sequence>MKKGIHPNYVEITATCSCGNVIKTHSTVGHDLNLDVCGKCHPFFTGKQRVVDTGGRVERFNKRFSIPGSK</sequence>
<reference key="1">
    <citation type="journal article" date="2001" name="Nature">
        <title>Complete genome sequence of a multiple drug resistant Salmonella enterica serovar Typhi CT18.</title>
        <authorList>
            <person name="Parkhill J."/>
            <person name="Dougan G."/>
            <person name="James K.D."/>
            <person name="Thomson N.R."/>
            <person name="Pickard D."/>
            <person name="Wain J."/>
            <person name="Churcher C.M."/>
            <person name="Mungall K.L."/>
            <person name="Bentley S.D."/>
            <person name="Holden M.T.G."/>
            <person name="Sebaihia M."/>
            <person name="Baker S."/>
            <person name="Basham D."/>
            <person name="Brooks K."/>
            <person name="Chillingworth T."/>
            <person name="Connerton P."/>
            <person name="Cronin A."/>
            <person name="Davis P."/>
            <person name="Davies R.M."/>
            <person name="Dowd L."/>
            <person name="White N."/>
            <person name="Farrar J."/>
            <person name="Feltwell T."/>
            <person name="Hamlin N."/>
            <person name="Haque A."/>
            <person name="Hien T.T."/>
            <person name="Holroyd S."/>
            <person name="Jagels K."/>
            <person name="Krogh A."/>
            <person name="Larsen T.S."/>
            <person name="Leather S."/>
            <person name="Moule S."/>
            <person name="O'Gaora P."/>
            <person name="Parry C."/>
            <person name="Quail M.A."/>
            <person name="Rutherford K.M."/>
            <person name="Simmonds M."/>
            <person name="Skelton J."/>
            <person name="Stevens K."/>
            <person name="Whitehead S."/>
            <person name="Barrell B.G."/>
        </authorList>
    </citation>
    <scope>NUCLEOTIDE SEQUENCE [LARGE SCALE GENOMIC DNA]</scope>
    <source>
        <strain>CT18</strain>
    </source>
</reference>
<reference key="2">
    <citation type="journal article" date="2003" name="J. Bacteriol.">
        <title>Comparative genomics of Salmonella enterica serovar Typhi strains Ty2 and CT18.</title>
        <authorList>
            <person name="Deng W."/>
            <person name="Liou S.-R."/>
            <person name="Plunkett G. III"/>
            <person name="Mayhew G.F."/>
            <person name="Rose D.J."/>
            <person name="Burland V."/>
            <person name="Kodoyianni V."/>
            <person name="Schwartz D.C."/>
            <person name="Blattner F.R."/>
        </authorList>
    </citation>
    <scope>NUCLEOTIDE SEQUENCE [LARGE SCALE GENOMIC DNA]</scope>
    <source>
        <strain>ATCC 700931 / Ty2</strain>
    </source>
</reference>
<dbReference type="EMBL" id="AL513382">
    <property type="protein sequence ID" value="CAD09527.1"/>
    <property type="molecule type" value="Genomic_DNA"/>
</dbReference>
<dbReference type="EMBL" id="AE014613">
    <property type="protein sequence ID" value="AAO71029.1"/>
    <property type="molecule type" value="Genomic_DNA"/>
</dbReference>
<dbReference type="RefSeq" id="NP_457956.1">
    <property type="nucleotide sequence ID" value="NC_003198.1"/>
</dbReference>
<dbReference type="RefSeq" id="WP_000715284.1">
    <property type="nucleotide sequence ID" value="NZ_WSUR01000010.1"/>
</dbReference>
<dbReference type="SMR" id="P66192"/>
<dbReference type="STRING" id="220341.gene:17587638"/>
<dbReference type="GeneID" id="66758349"/>
<dbReference type="KEGG" id="stt:t3522"/>
<dbReference type="KEGG" id="sty:STY3774"/>
<dbReference type="PATRIC" id="fig|220341.7.peg.3852"/>
<dbReference type="eggNOG" id="COG0254">
    <property type="taxonomic scope" value="Bacteria"/>
</dbReference>
<dbReference type="HOGENOM" id="CLU_114306_4_3_6"/>
<dbReference type="OMA" id="IHVDVWS"/>
<dbReference type="OrthoDB" id="9803251at2"/>
<dbReference type="Proteomes" id="UP000000541">
    <property type="component" value="Chromosome"/>
</dbReference>
<dbReference type="Proteomes" id="UP000002670">
    <property type="component" value="Chromosome"/>
</dbReference>
<dbReference type="GO" id="GO:1990904">
    <property type="term" value="C:ribonucleoprotein complex"/>
    <property type="evidence" value="ECO:0007669"/>
    <property type="project" value="UniProtKB-KW"/>
</dbReference>
<dbReference type="GO" id="GO:0005840">
    <property type="term" value="C:ribosome"/>
    <property type="evidence" value="ECO:0007669"/>
    <property type="project" value="UniProtKB-KW"/>
</dbReference>
<dbReference type="GO" id="GO:0046872">
    <property type="term" value="F:metal ion binding"/>
    <property type="evidence" value="ECO:0007669"/>
    <property type="project" value="UniProtKB-KW"/>
</dbReference>
<dbReference type="GO" id="GO:0019843">
    <property type="term" value="F:rRNA binding"/>
    <property type="evidence" value="ECO:0007669"/>
    <property type="project" value="UniProtKB-KW"/>
</dbReference>
<dbReference type="GO" id="GO:0003735">
    <property type="term" value="F:structural constituent of ribosome"/>
    <property type="evidence" value="ECO:0007669"/>
    <property type="project" value="InterPro"/>
</dbReference>
<dbReference type="GO" id="GO:0006412">
    <property type="term" value="P:translation"/>
    <property type="evidence" value="ECO:0007669"/>
    <property type="project" value="UniProtKB-UniRule"/>
</dbReference>
<dbReference type="FunFam" id="4.10.830.30:FF:000001">
    <property type="entry name" value="50S ribosomal protein L31"/>
    <property type="match status" value="1"/>
</dbReference>
<dbReference type="Gene3D" id="4.10.830.30">
    <property type="entry name" value="Ribosomal protein L31"/>
    <property type="match status" value="1"/>
</dbReference>
<dbReference type="HAMAP" id="MF_00501">
    <property type="entry name" value="Ribosomal_bL31_1"/>
    <property type="match status" value="1"/>
</dbReference>
<dbReference type="InterPro" id="IPR034704">
    <property type="entry name" value="Ribosomal_bL28/bL31-like_sf"/>
</dbReference>
<dbReference type="InterPro" id="IPR002150">
    <property type="entry name" value="Ribosomal_bL31"/>
</dbReference>
<dbReference type="InterPro" id="IPR027491">
    <property type="entry name" value="Ribosomal_bL31_A"/>
</dbReference>
<dbReference type="InterPro" id="IPR042105">
    <property type="entry name" value="Ribosomal_bL31_sf"/>
</dbReference>
<dbReference type="NCBIfam" id="TIGR00105">
    <property type="entry name" value="L31"/>
    <property type="match status" value="1"/>
</dbReference>
<dbReference type="NCBIfam" id="NF000612">
    <property type="entry name" value="PRK00019.1"/>
    <property type="match status" value="1"/>
</dbReference>
<dbReference type="NCBIfam" id="NF001809">
    <property type="entry name" value="PRK00528.1"/>
    <property type="match status" value="1"/>
</dbReference>
<dbReference type="PANTHER" id="PTHR33280">
    <property type="entry name" value="50S RIBOSOMAL PROTEIN L31, CHLOROPLASTIC"/>
    <property type="match status" value="1"/>
</dbReference>
<dbReference type="PANTHER" id="PTHR33280:SF6">
    <property type="entry name" value="LARGE RIBOSOMAL SUBUNIT PROTEIN BL31A"/>
    <property type="match status" value="1"/>
</dbReference>
<dbReference type="Pfam" id="PF01197">
    <property type="entry name" value="Ribosomal_L31"/>
    <property type="match status" value="1"/>
</dbReference>
<dbReference type="PRINTS" id="PR01249">
    <property type="entry name" value="RIBOSOMALL31"/>
</dbReference>
<dbReference type="SUPFAM" id="SSF143800">
    <property type="entry name" value="L28p-like"/>
    <property type="match status" value="1"/>
</dbReference>
<dbReference type="PROSITE" id="PS01143">
    <property type="entry name" value="RIBOSOMAL_L31"/>
    <property type="match status" value="1"/>
</dbReference>
<evidence type="ECO:0000255" key="1">
    <source>
        <dbReference type="HAMAP-Rule" id="MF_00501"/>
    </source>
</evidence>
<evidence type="ECO:0000305" key="2"/>
<gene>
    <name evidence="1" type="primary">rpmE</name>
    <name type="ordered locus">STY3774</name>
    <name type="ordered locus">t3522</name>
</gene>